<sequence length="325" mass="35145">MTTSLVLAVPSKGRLQENAEAFFARAGLTLAKPRGVRDYRGTIAELDNVEIAYLSASEIASQLARGTVHLGVTGEDLIRESIVDADKRVALITSLGFGNANVVVAVPQSWIDVRTMADLDDVATGFRAQHNRRMRVATKYINLTRAFFASHGVVDYRIVESAGATEGAPAVGTAEMIVDITTTGATLTANGLRVLDDGVILRSQANLVASREADWSNGARETARVILDHIAARARASKYREVRTRFPGCDAALLKEAHDRFGVVSPFGGPTSSGMVTLHCPPDRLYALASFLRLHGADTVSIASLDYVFDRDNPLFEKLEVFLRT</sequence>
<feature type="chain" id="PRO_1000004482" description="ATP phosphoribosyltransferase">
    <location>
        <begin position="1"/>
        <end position="325"/>
    </location>
</feature>
<organism>
    <name type="scientific">Nitrobacter winogradskyi (strain ATCC 25391 / DSM 10237 / CIP 104748 / NCIMB 11846 / Nb-255)</name>
    <dbReference type="NCBI Taxonomy" id="323098"/>
    <lineage>
        <taxon>Bacteria</taxon>
        <taxon>Pseudomonadati</taxon>
        <taxon>Pseudomonadota</taxon>
        <taxon>Alphaproteobacteria</taxon>
        <taxon>Hyphomicrobiales</taxon>
        <taxon>Nitrobacteraceae</taxon>
        <taxon>Nitrobacter</taxon>
    </lineage>
</organism>
<dbReference type="EC" id="2.4.2.17" evidence="1"/>
<dbReference type="EMBL" id="CP000115">
    <property type="protein sequence ID" value="ABA05819.1"/>
    <property type="molecule type" value="Genomic_DNA"/>
</dbReference>
<dbReference type="RefSeq" id="WP_011315770.1">
    <property type="nucleotide sequence ID" value="NC_007406.1"/>
</dbReference>
<dbReference type="SMR" id="Q3SPH2"/>
<dbReference type="STRING" id="323098.Nwi_2566"/>
<dbReference type="KEGG" id="nwi:Nwi_2566"/>
<dbReference type="eggNOG" id="COG0040">
    <property type="taxonomic scope" value="Bacteria"/>
</dbReference>
<dbReference type="HOGENOM" id="CLU_038115_0_1_5"/>
<dbReference type="OrthoDB" id="9806435at2"/>
<dbReference type="UniPathway" id="UPA00031">
    <property type="reaction ID" value="UER00006"/>
</dbReference>
<dbReference type="Proteomes" id="UP000002531">
    <property type="component" value="Chromosome"/>
</dbReference>
<dbReference type="GO" id="GO:0005737">
    <property type="term" value="C:cytoplasm"/>
    <property type="evidence" value="ECO:0007669"/>
    <property type="project" value="UniProtKB-SubCell"/>
</dbReference>
<dbReference type="GO" id="GO:0005524">
    <property type="term" value="F:ATP binding"/>
    <property type="evidence" value="ECO:0007669"/>
    <property type="project" value="UniProtKB-KW"/>
</dbReference>
<dbReference type="GO" id="GO:0003879">
    <property type="term" value="F:ATP phosphoribosyltransferase activity"/>
    <property type="evidence" value="ECO:0007669"/>
    <property type="project" value="UniProtKB-UniRule"/>
</dbReference>
<dbReference type="GO" id="GO:0000287">
    <property type="term" value="F:magnesium ion binding"/>
    <property type="evidence" value="ECO:0007669"/>
    <property type="project" value="UniProtKB-UniRule"/>
</dbReference>
<dbReference type="GO" id="GO:0000105">
    <property type="term" value="P:L-histidine biosynthetic process"/>
    <property type="evidence" value="ECO:0007669"/>
    <property type="project" value="UniProtKB-UniRule"/>
</dbReference>
<dbReference type="CDD" id="cd13593">
    <property type="entry name" value="PBP2_HisGL3"/>
    <property type="match status" value="1"/>
</dbReference>
<dbReference type="Gene3D" id="3.40.190.10">
    <property type="entry name" value="Periplasmic binding protein-like II"/>
    <property type="match status" value="2"/>
</dbReference>
<dbReference type="HAMAP" id="MF_00079">
    <property type="entry name" value="HisG_Long"/>
    <property type="match status" value="1"/>
</dbReference>
<dbReference type="InterPro" id="IPR020621">
    <property type="entry name" value="ATP-PRT_HisG_long"/>
</dbReference>
<dbReference type="InterPro" id="IPR013820">
    <property type="entry name" value="ATP_PRibTrfase_cat"/>
</dbReference>
<dbReference type="InterPro" id="IPR018198">
    <property type="entry name" value="ATP_PRibTrfase_CS"/>
</dbReference>
<dbReference type="InterPro" id="IPR001348">
    <property type="entry name" value="ATP_PRibTrfase_HisG"/>
</dbReference>
<dbReference type="NCBIfam" id="TIGR00070">
    <property type="entry name" value="hisG"/>
    <property type="match status" value="1"/>
</dbReference>
<dbReference type="PANTHER" id="PTHR21403:SF8">
    <property type="entry name" value="ATP PHOSPHORIBOSYLTRANSFERASE"/>
    <property type="match status" value="1"/>
</dbReference>
<dbReference type="PANTHER" id="PTHR21403">
    <property type="entry name" value="ATP PHOSPHORIBOSYLTRANSFERASE ATP-PRTASE"/>
    <property type="match status" value="1"/>
</dbReference>
<dbReference type="Pfam" id="PF01634">
    <property type="entry name" value="HisG"/>
    <property type="match status" value="1"/>
</dbReference>
<dbReference type="SUPFAM" id="SSF53850">
    <property type="entry name" value="Periplasmic binding protein-like II"/>
    <property type="match status" value="1"/>
</dbReference>
<dbReference type="PROSITE" id="PS01316">
    <property type="entry name" value="ATP_P_PHORIBOSYLTR"/>
    <property type="match status" value="1"/>
</dbReference>
<protein>
    <recommendedName>
        <fullName evidence="1">ATP phosphoribosyltransferase</fullName>
        <shortName evidence="1">ATP-PRT</shortName>
        <shortName evidence="1">ATP-PRTase</shortName>
        <ecNumber evidence="1">2.4.2.17</ecNumber>
    </recommendedName>
</protein>
<gene>
    <name evidence="1" type="primary">hisG</name>
    <name type="ordered locus">Nwi_2566</name>
</gene>
<evidence type="ECO:0000255" key="1">
    <source>
        <dbReference type="HAMAP-Rule" id="MF_00079"/>
    </source>
</evidence>
<keyword id="KW-0028">Amino-acid biosynthesis</keyword>
<keyword id="KW-0067">ATP-binding</keyword>
<keyword id="KW-0963">Cytoplasm</keyword>
<keyword id="KW-0328">Glycosyltransferase</keyword>
<keyword id="KW-0368">Histidine biosynthesis</keyword>
<keyword id="KW-0460">Magnesium</keyword>
<keyword id="KW-0479">Metal-binding</keyword>
<keyword id="KW-0547">Nucleotide-binding</keyword>
<keyword id="KW-1185">Reference proteome</keyword>
<keyword id="KW-0808">Transferase</keyword>
<name>HIS1_NITWN</name>
<reference key="1">
    <citation type="journal article" date="2006" name="Appl. Environ. Microbiol.">
        <title>Genome sequence of the chemolithoautotrophic nitrite-oxidizing bacterium Nitrobacter winogradskyi Nb-255.</title>
        <authorList>
            <person name="Starkenburg S.R."/>
            <person name="Chain P.S.G."/>
            <person name="Sayavedra-Soto L.A."/>
            <person name="Hauser L."/>
            <person name="Land M.L."/>
            <person name="Larimer F.W."/>
            <person name="Malfatti S.A."/>
            <person name="Klotz M.G."/>
            <person name="Bottomley P.J."/>
            <person name="Arp D.J."/>
            <person name="Hickey W.J."/>
        </authorList>
    </citation>
    <scope>NUCLEOTIDE SEQUENCE [LARGE SCALE GENOMIC DNA]</scope>
    <source>
        <strain>ATCC 25391 / DSM 10237 / CIP 104748 / NCIMB 11846 / Nb-255</strain>
    </source>
</reference>
<accession>Q3SPH2</accession>
<proteinExistence type="inferred from homology"/>
<comment type="function">
    <text evidence="1">Catalyzes the condensation of ATP and 5-phosphoribose 1-diphosphate to form N'-(5'-phosphoribosyl)-ATP (PR-ATP). Has a crucial role in the pathway because the rate of histidine biosynthesis seems to be controlled primarily by regulation of HisG enzymatic activity.</text>
</comment>
<comment type="catalytic activity">
    <reaction evidence="1">
        <text>1-(5-phospho-beta-D-ribosyl)-ATP + diphosphate = 5-phospho-alpha-D-ribose 1-diphosphate + ATP</text>
        <dbReference type="Rhea" id="RHEA:18473"/>
        <dbReference type="ChEBI" id="CHEBI:30616"/>
        <dbReference type="ChEBI" id="CHEBI:33019"/>
        <dbReference type="ChEBI" id="CHEBI:58017"/>
        <dbReference type="ChEBI" id="CHEBI:73183"/>
        <dbReference type="EC" id="2.4.2.17"/>
    </reaction>
</comment>
<comment type="cofactor">
    <cofactor evidence="1">
        <name>Mg(2+)</name>
        <dbReference type="ChEBI" id="CHEBI:18420"/>
    </cofactor>
</comment>
<comment type="activity regulation">
    <text evidence="1">Feedback inhibited by histidine.</text>
</comment>
<comment type="pathway">
    <text evidence="1">Amino-acid biosynthesis; L-histidine biosynthesis; L-histidine from 5-phospho-alpha-D-ribose 1-diphosphate: step 1/9.</text>
</comment>
<comment type="subcellular location">
    <subcellularLocation>
        <location evidence="1">Cytoplasm</location>
    </subcellularLocation>
</comment>
<comment type="similarity">
    <text evidence="1">Belongs to the ATP phosphoribosyltransferase family. Long subfamily.</text>
</comment>